<dbReference type="EC" id="6.3.4.20" evidence="1"/>
<dbReference type="EMBL" id="CP000872">
    <property type="protein sequence ID" value="ABX63006.1"/>
    <property type="molecule type" value="Genomic_DNA"/>
</dbReference>
<dbReference type="RefSeq" id="WP_004691111.1">
    <property type="nucleotide sequence ID" value="NC_010103.1"/>
</dbReference>
<dbReference type="SMR" id="A9M959"/>
<dbReference type="GeneID" id="55591553"/>
<dbReference type="KEGG" id="bcs:BCAN_A2017"/>
<dbReference type="HOGENOM" id="CLU_081854_1_0_5"/>
<dbReference type="PhylomeDB" id="A9M959"/>
<dbReference type="UniPathway" id="UPA00391"/>
<dbReference type="Proteomes" id="UP000001385">
    <property type="component" value="Chromosome I"/>
</dbReference>
<dbReference type="GO" id="GO:0005524">
    <property type="term" value="F:ATP binding"/>
    <property type="evidence" value="ECO:0007669"/>
    <property type="project" value="UniProtKB-UniRule"/>
</dbReference>
<dbReference type="GO" id="GO:0016879">
    <property type="term" value="F:ligase activity, forming carbon-nitrogen bonds"/>
    <property type="evidence" value="ECO:0007669"/>
    <property type="project" value="UniProtKB-UniRule"/>
</dbReference>
<dbReference type="GO" id="GO:0008270">
    <property type="term" value="F:zinc ion binding"/>
    <property type="evidence" value="ECO:0007669"/>
    <property type="project" value="UniProtKB-UniRule"/>
</dbReference>
<dbReference type="GO" id="GO:0008616">
    <property type="term" value="P:queuosine biosynthetic process"/>
    <property type="evidence" value="ECO:0007669"/>
    <property type="project" value="UniProtKB-UniRule"/>
</dbReference>
<dbReference type="CDD" id="cd01995">
    <property type="entry name" value="QueC-like"/>
    <property type="match status" value="1"/>
</dbReference>
<dbReference type="Gene3D" id="3.40.50.620">
    <property type="entry name" value="HUPs"/>
    <property type="match status" value="1"/>
</dbReference>
<dbReference type="HAMAP" id="MF_01633">
    <property type="entry name" value="QueC"/>
    <property type="match status" value="1"/>
</dbReference>
<dbReference type="InterPro" id="IPR018317">
    <property type="entry name" value="QueC"/>
</dbReference>
<dbReference type="InterPro" id="IPR014729">
    <property type="entry name" value="Rossmann-like_a/b/a_fold"/>
</dbReference>
<dbReference type="NCBIfam" id="TIGR00364">
    <property type="entry name" value="7-cyano-7-deazaguanine synthase QueC"/>
    <property type="match status" value="1"/>
</dbReference>
<dbReference type="PANTHER" id="PTHR42914">
    <property type="entry name" value="7-CYANO-7-DEAZAGUANINE SYNTHASE"/>
    <property type="match status" value="1"/>
</dbReference>
<dbReference type="PANTHER" id="PTHR42914:SF1">
    <property type="entry name" value="7-CYANO-7-DEAZAGUANINE SYNTHASE"/>
    <property type="match status" value="1"/>
</dbReference>
<dbReference type="Pfam" id="PF06508">
    <property type="entry name" value="QueC"/>
    <property type="match status" value="1"/>
</dbReference>
<dbReference type="PIRSF" id="PIRSF006293">
    <property type="entry name" value="ExsB"/>
    <property type="match status" value="1"/>
</dbReference>
<dbReference type="SUPFAM" id="SSF52402">
    <property type="entry name" value="Adenine nucleotide alpha hydrolases-like"/>
    <property type="match status" value="1"/>
</dbReference>
<sequence length="232" mass="25284">MKTLVICSGGLDSVSLAHKMAAEHELTGLLSFDYGQRHKKELDFAQACAKRLGVPHQIIDIRTIGASLTGSALTDDVDVPDGHYAEETMKVTVVPNRNAIMLVIAFGVAAAQKADAVALAVHGGDHFIYPDCRPGFIEAFQTMQKHALDGYADVKLLAPYVHATKADIVADGAKYRTPFEATWSCYKGADRHCGRCGTCVERREAFHLAGIDDPTSYEDADFWRATTQKRNA</sequence>
<organism>
    <name type="scientific">Brucella canis (strain ATCC 23365 / NCTC 10854 / RM-666)</name>
    <dbReference type="NCBI Taxonomy" id="483179"/>
    <lineage>
        <taxon>Bacteria</taxon>
        <taxon>Pseudomonadati</taxon>
        <taxon>Pseudomonadota</taxon>
        <taxon>Alphaproteobacteria</taxon>
        <taxon>Hyphomicrobiales</taxon>
        <taxon>Brucellaceae</taxon>
        <taxon>Brucella/Ochrobactrum group</taxon>
        <taxon>Brucella</taxon>
    </lineage>
</organism>
<comment type="function">
    <text evidence="1">Catalyzes the ATP-dependent conversion of 7-carboxy-7-deazaguanine (CDG) to 7-cyano-7-deazaguanine (preQ(0)).</text>
</comment>
<comment type="catalytic activity">
    <reaction evidence="1">
        <text>7-carboxy-7-deazaguanine + NH4(+) + ATP = 7-cyano-7-deazaguanine + ADP + phosphate + H2O + H(+)</text>
        <dbReference type="Rhea" id="RHEA:27982"/>
        <dbReference type="ChEBI" id="CHEBI:15377"/>
        <dbReference type="ChEBI" id="CHEBI:15378"/>
        <dbReference type="ChEBI" id="CHEBI:28938"/>
        <dbReference type="ChEBI" id="CHEBI:30616"/>
        <dbReference type="ChEBI" id="CHEBI:43474"/>
        <dbReference type="ChEBI" id="CHEBI:45075"/>
        <dbReference type="ChEBI" id="CHEBI:61036"/>
        <dbReference type="ChEBI" id="CHEBI:456216"/>
        <dbReference type="EC" id="6.3.4.20"/>
    </reaction>
</comment>
<comment type="cofactor">
    <cofactor evidence="1">
        <name>Zn(2+)</name>
        <dbReference type="ChEBI" id="CHEBI:29105"/>
    </cofactor>
    <text evidence="1">Binds 1 zinc ion per subunit.</text>
</comment>
<comment type="pathway">
    <text evidence="1">Purine metabolism; 7-cyano-7-deazaguanine biosynthesis.</text>
</comment>
<comment type="similarity">
    <text evidence="1">Belongs to the QueC family.</text>
</comment>
<accession>A9M959</accession>
<protein>
    <recommendedName>
        <fullName evidence="1">7-cyano-7-deazaguanine synthase</fullName>
        <ecNumber evidence="1">6.3.4.20</ecNumber>
    </recommendedName>
    <alternativeName>
        <fullName evidence="1">7-cyano-7-carbaguanine synthase</fullName>
    </alternativeName>
    <alternativeName>
        <fullName evidence="1">PreQ(0) synthase</fullName>
    </alternativeName>
    <alternativeName>
        <fullName evidence="1">Queuosine biosynthesis protein QueC</fullName>
    </alternativeName>
</protein>
<keyword id="KW-0067">ATP-binding</keyword>
<keyword id="KW-0436">Ligase</keyword>
<keyword id="KW-0479">Metal-binding</keyword>
<keyword id="KW-0547">Nucleotide-binding</keyword>
<keyword id="KW-0671">Queuosine biosynthesis</keyword>
<keyword id="KW-1185">Reference proteome</keyword>
<keyword id="KW-0862">Zinc</keyword>
<feature type="chain" id="PRO_1000088148" description="7-cyano-7-deazaguanine synthase">
    <location>
        <begin position="1"/>
        <end position="232"/>
    </location>
</feature>
<feature type="binding site" evidence="1">
    <location>
        <begin position="7"/>
        <end position="17"/>
    </location>
    <ligand>
        <name>ATP</name>
        <dbReference type="ChEBI" id="CHEBI:30616"/>
    </ligand>
</feature>
<feature type="binding site" evidence="1">
    <location>
        <position position="185"/>
    </location>
    <ligand>
        <name>Zn(2+)</name>
        <dbReference type="ChEBI" id="CHEBI:29105"/>
    </ligand>
</feature>
<feature type="binding site" evidence="1">
    <location>
        <position position="193"/>
    </location>
    <ligand>
        <name>Zn(2+)</name>
        <dbReference type="ChEBI" id="CHEBI:29105"/>
    </ligand>
</feature>
<feature type="binding site" evidence="1">
    <location>
        <position position="196"/>
    </location>
    <ligand>
        <name>Zn(2+)</name>
        <dbReference type="ChEBI" id="CHEBI:29105"/>
    </ligand>
</feature>
<feature type="binding site" evidence="1">
    <location>
        <position position="199"/>
    </location>
    <ligand>
        <name>Zn(2+)</name>
        <dbReference type="ChEBI" id="CHEBI:29105"/>
    </ligand>
</feature>
<evidence type="ECO:0000255" key="1">
    <source>
        <dbReference type="HAMAP-Rule" id="MF_01633"/>
    </source>
</evidence>
<gene>
    <name evidence="1" type="primary">queC</name>
    <name type="ordered locus">BCAN_A2017</name>
</gene>
<reference key="1">
    <citation type="submission" date="2007-10" db="EMBL/GenBank/DDBJ databases">
        <title>Brucella canis ATCC 23365 whole genome shotgun sequencing project.</title>
        <authorList>
            <person name="Setubal J.C."/>
            <person name="Bowns C."/>
            <person name="Boyle S."/>
            <person name="Crasta O.R."/>
            <person name="Czar M.J."/>
            <person name="Dharmanolla C."/>
            <person name="Gillespie J.J."/>
            <person name="Kenyon R.W."/>
            <person name="Lu J."/>
            <person name="Mane S."/>
            <person name="Mohapatra S."/>
            <person name="Nagrani S."/>
            <person name="Purkayastha A."/>
            <person name="Rajasimha H.K."/>
            <person name="Shallom J.M."/>
            <person name="Shallom S."/>
            <person name="Shukla M."/>
            <person name="Snyder E.E."/>
            <person name="Sobral B.W."/>
            <person name="Wattam A.R."/>
            <person name="Will R."/>
            <person name="Williams K."/>
            <person name="Yoo H."/>
            <person name="Bruce D."/>
            <person name="Detter C."/>
            <person name="Munk C."/>
            <person name="Brettin T.S."/>
        </authorList>
    </citation>
    <scope>NUCLEOTIDE SEQUENCE [LARGE SCALE GENOMIC DNA]</scope>
    <source>
        <strain>ATCC 23365 / NCTC 10854 / RM-666</strain>
    </source>
</reference>
<name>QUEC_BRUC2</name>
<proteinExistence type="inferred from homology"/>